<protein>
    <recommendedName>
        <fullName evidence="1">NAD(P)H-quinone oxidoreductase subunit 3, chloroplastic</fullName>
        <ecNumber evidence="1">7.1.1.-</ecNumber>
    </recommendedName>
    <alternativeName>
        <fullName evidence="1">NAD(P)H dehydrogenase subunit 3</fullName>
    </alternativeName>
    <alternativeName>
        <fullName evidence="1">NADH-plastoquinone oxidoreductase subunit 3</fullName>
    </alternativeName>
</protein>
<accession>P0C321</accession>
<accession>P12126</accession>
<accession>Q6QY70</accession>
<accession>Q7G225</accession>
<sequence length="120" mass="13900">MFLLHEYDIFWAFLIIASLIPILAFWISALLAPVREGPEKLSSYESGIEPMGGAWLQFRIRYYMFALVFVVFDVETVFLYPWAMSFDVLGISVFIEAFIFVLILVVGLVYAWRKGALEWS</sequence>
<proteinExistence type="inferred from homology"/>
<gene>
    <name evidence="1" type="primary">ndhC</name>
    <name type="ORF">9311058</name>
</gene>
<feature type="chain" id="PRO_0000288692" description="NAD(P)H-quinone oxidoreductase subunit 3, chloroplastic">
    <location>
        <begin position="1"/>
        <end position="120"/>
    </location>
</feature>
<feature type="transmembrane region" description="Helical" evidence="1">
    <location>
        <begin position="9"/>
        <end position="29"/>
    </location>
</feature>
<feature type="transmembrane region" description="Helical" evidence="1">
    <location>
        <begin position="64"/>
        <end position="84"/>
    </location>
</feature>
<feature type="transmembrane region" description="Helical" evidence="1">
    <location>
        <begin position="88"/>
        <end position="108"/>
    </location>
</feature>
<geneLocation type="chloroplast"/>
<organism>
    <name type="scientific">Oryza sativa subsp. indica</name>
    <name type="common">Rice</name>
    <dbReference type="NCBI Taxonomy" id="39946"/>
    <lineage>
        <taxon>Eukaryota</taxon>
        <taxon>Viridiplantae</taxon>
        <taxon>Streptophyta</taxon>
        <taxon>Embryophyta</taxon>
        <taxon>Tracheophyta</taxon>
        <taxon>Spermatophyta</taxon>
        <taxon>Magnoliopsida</taxon>
        <taxon>Liliopsida</taxon>
        <taxon>Poales</taxon>
        <taxon>Poaceae</taxon>
        <taxon>BOP clade</taxon>
        <taxon>Oryzoideae</taxon>
        <taxon>Oryzeae</taxon>
        <taxon>Oryzinae</taxon>
        <taxon>Oryza</taxon>
        <taxon>Oryza sativa</taxon>
    </lineage>
</organism>
<dbReference type="EC" id="7.1.1.-" evidence="1"/>
<dbReference type="EMBL" id="AY522329">
    <property type="protein sequence ID" value="AAS46059.1"/>
    <property type="molecule type" value="Genomic_DNA"/>
</dbReference>
<dbReference type="RefSeq" id="YP_009161369.1">
    <property type="nucleotide sequence ID" value="NC_027678.1"/>
</dbReference>
<dbReference type="RefSeq" id="YP_654219.1">
    <property type="nucleotide sequence ID" value="NC_008155.1"/>
</dbReference>
<dbReference type="SMR" id="P0C321"/>
<dbReference type="STRING" id="39946.P0C321"/>
<dbReference type="EnsemblPlants" id="BGIOSGA039556-TA">
    <property type="protein sequence ID" value="BGIOSGA039556-PA"/>
    <property type="gene ID" value="BGIOSGA039556"/>
</dbReference>
<dbReference type="GeneID" id="4126869"/>
<dbReference type="Gramene" id="BGIOSGA039556-TA">
    <property type="protein sequence ID" value="BGIOSGA039556-PA"/>
    <property type="gene ID" value="BGIOSGA039556"/>
</dbReference>
<dbReference type="HOGENOM" id="CLU_119549_1_1_1"/>
<dbReference type="OMA" id="YVYAFLY"/>
<dbReference type="Proteomes" id="UP000007015">
    <property type="component" value="Chloroplast"/>
</dbReference>
<dbReference type="GO" id="GO:0009535">
    <property type="term" value="C:chloroplast thylakoid membrane"/>
    <property type="evidence" value="ECO:0007669"/>
    <property type="project" value="UniProtKB-SubCell"/>
</dbReference>
<dbReference type="GO" id="GO:0030964">
    <property type="term" value="C:NADH dehydrogenase complex"/>
    <property type="evidence" value="ECO:0007669"/>
    <property type="project" value="TreeGrafter"/>
</dbReference>
<dbReference type="GO" id="GO:0009536">
    <property type="term" value="C:plastid"/>
    <property type="evidence" value="ECO:0000305"/>
    <property type="project" value="Gramene"/>
</dbReference>
<dbReference type="GO" id="GO:0008137">
    <property type="term" value="F:NADH dehydrogenase (ubiquinone) activity"/>
    <property type="evidence" value="ECO:0007669"/>
    <property type="project" value="InterPro"/>
</dbReference>
<dbReference type="GO" id="GO:0048038">
    <property type="term" value="F:quinone binding"/>
    <property type="evidence" value="ECO:0007669"/>
    <property type="project" value="UniProtKB-KW"/>
</dbReference>
<dbReference type="GO" id="GO:0019684">
    <property type="term" value="P:photosynthesis, light reaction"/>
    <property type="evidence" value="ECO:0007669"/>
    <property type="project" value="UniProtKB-UniRule"/>
</dbReference>
<dbReference type="FunFam" id="1.20.58.1610:FF:000001">
    <property type="entry name" value="NAD(P)H-quinone oxidoreductase subunit 3, chloroplastic"/>
    <property type="match status" value="1"/>
</dbReference>
<dbReference type="Gene3D" id="1.20.58.1610">
    <property type="entry name" value="NADH:ubiquinone/plastoquinone oxidoreductase, chain 3"/>
    <property type="match status" value="1"/>
</dbReference>
<dbReference type="HAMAP" id="MF_01394">
    <property type="entry name" value="NDH1_NuoA"/>
    <property type="match status" value="1"/>
</dbReference>
<dbReference type="InterPro" id="IPR023043">
    <property type="entry name" value="NAD(P)H_OxRDtase_bac/plastid"/>
</dbReference>
<dbReference type="InterPro" id="IPR000440">
    <property type="entry name" value="NADH_UbQ/plastoQ_OxRdtase_su3"/>
</dbReference>
<dbReference type="InterPro" id="IPR038430">
    <property type="entry name" value="NDAH_ubi_oxred_su3_sf"/>
</dbReference>
<dbReference type="PANTHER" id="PTHR11058">
    <property type="entry name" value="NADH-UBIQUINONE OXIDOREDUCTASE CHAIN 3"/>
    <property type="match status" value="1"/>
</dbReference>
<dbReference type="PANTHER" id="PTHR11058:SF9">
    <property type="entry name" value="NADH-UBIQUINONE OXIDOREDUCTASE CHAIN 3"/>
    <property type="match status" value="1"/>
</dbReference>
<dbReference type="Pfam" id="PF00507">
    <property type="entry name" value="Oxidored_q4"/>
    <property type="match status" value="1"/>
</dbReference>
<name>NU3C_ORYSI</name>
<keyword id="KW-0150">Chloroplast</keyword>
<keyword id="KW-0472">Membrane</keyword>
<keyword id="KW-0520">NAD</keyword>
<keyword id="KW-0521">NADP</keyword>
<keyword id="KW-0934">Plastid</keyword>
<keyword id="KW-0618">Plastoquinone</keyword>
<keyword id="KW-0874">Quinone</keyword>
<keyword id="KW-1185">Reference proteome</keyword>
<keyword id="KW-0793">Thylakoid</keyword>
<keyword id="KW-1278">Translocase</keyword>
<keyword id="KW-0812">Transmembrane</keyword>
<keyword id="KW-1133">Transmembrane helix</keyword>
<keyword id="KW-0813">Transport</keyword>
<reference key="1">
    <citation type="journal article" date="2004" name="Plant Physiol.">
        <title>A comparison of rice chloroplast genomes.</title>
        <authorList>
            <person name="Tang J."/>
            <person name="Xia H."/>
            <person name="Cao M."/>
            <person name="Zhang X."/>
            <person name="Zeng W."/>
            <person name="Hu S."/>
            <person name="Tong W."/>
            <person name="Wang J."/>
            <person name="Wang J."/>
            <person name="Yu J."/>
            <person name="Yang H."/>
            <person name="Zhu L."/>
        </authorList>
    </citation>
    <scope>NUCLEOTIDE SEQUENCE [LARGE SCALE GENOMIC DNA]</scope>
    <source>
        <strain>cv. 93-11</strain>
    </source>
</reference>
<comment type="function">
    <text evidence="1">NDH shuttles electrons from NAD(P)H:plastoquinone, via FMN and iron-sulfur (Fe-S) centers, to quinones in the photosynthetic chain and possibly in a chloroplast respiratory chain. The immediate electron acceptor for the enzyme in this species is believed to be plastoquinone. Couples the redox reaction to proton translocation, and thus conserves the redox energy in a proton gradient.</text>
</comment>
<comment type="catalytic activity">
    <reaction evidence="1">
        <text>a plastoquinone + NADH + (n+1) H(+)(in) = a plastoquinol + NAD(+) + n H(+)(out)</text>
        <dbReference type="Rhea" id="RHEA:42608"/>
        <dbReference type="Rhea" id="RHEA-COMP:9561"/>
        <dbReference type="Rhea" id="RHEA-COMP:9562"/>
        <dbReference type="ChEBI" id="CHEBI:15378"/>
        <dbReference type="ChEBI" id="CHEBI:17757"/>
        <dbReference type="ChEBI" id="CHEBI:57540"/>
        <dbReference type="ChEBI" id="CHEBI:57945"/>
        <dbReference type="ChEBI" id="CHEBI:62192"/>
    </reaction>
</comment>
<comment type="catalytic activity">
    <reaction evidence="1">
        <text>a plastoquinone + NADPH + (n+1) H(+)(in) = a plastoquinol + NADP(+) + n H(+)(out)</text>
        <dbReference type="Rhea" id="RHEA:42612"/>
        <dbReference type="Rhea" id="RHEA-COMP:9561"/>
        <dbReference type="Rhea" id="RHEA-COMP:9562"/>
        <dbReference type="ChEBI" id="CHEBI:15378"/>
        <dbReference type="ChEBI" id="CHEBI:17757"/>
        <dbReference type="ChEBI" id="CHEBI:57783"/>
        <dbReference type="ChEBI" id="CHEBI:58349"/>
        <dbReference type="ChEBI" id="CHEBI:62192"/>
    </reaction>
</comment>
<comment type="subunit">
    <text evidence="1">NDH is composed of at least 16 different subunits, 5 of which are encoded in the nucleus.</text>
</comment>
<comment type="subcellular location">
    <subcellularLocation>
        <location evidence="1">Plastid</location>
        <location evidence="1">Chloroplast thylakoid membrane</location>
        <topology evidence="1">Multi-pass membrane protein</topology>
    </subcellularLocation>
</comment>
<comment type="similarity">
    <text evidence="1">Belongs to the complex I subunit 3 family.</text>
</comment>
<evidence type="ECO:0000255" key="1">
    <source>
        <dbReference type="HAMAP-Rule" id="MF_01394"/>
    </source>
</evidence>